<reference key="1">
    <citation type="book" date="1985" name="Peptide chemistry 1984">
        <editorList>
            <person name="Izumiya N."/>
        </editorList>
        <authorList>
            <person name="Yasuhara T."/>
            <person name="Itokawa H."/>
            <person name="Suzuki N."/>
            <person name="Nakamura H."/>
            <person name="Nakajima T."/>
        </authorList>
    </citation>
    <scope>PROTEIN SEQUENCE</scope>
    <scope>FUNCTION</scope>
    <scope>AMIDATION AT LEU-13</scope>
    <scope>SUBCELLULAR LOCATION</scope>
    <source>
        <tissue>Venom</tissue>
    </source>
</reference>
<organism>
    <name type="scientific">Vespa xanthoptera</name>
    <name type="common">Japanese yellow hornet</name>
    <name type="synonym">Vespa simillima xanthoptera</name>
    <dbReference type="NCBI Taxonomy" id="7448"/>
    <lineage>
        <taxon>Eukaryota</taxon>
        <taxon>Metazoa</taxon>
        <taxon>Ecdysozoa</taxon>
        <taxon>Arthropoda</taxon>
        <taxon>Hexapoda</taxon>
        <taxon>Insecta</taxon>
        <taxon>Pterygota</taxon>
        <taxon>Neoptera</taxon>
        <taxon>Endopterygota</taxon>
        <taxon>Hymenoptera</taxon>
        <taxon>Apocrita</taxon>
        <taxon>Aculeata</taxon>
        <taxon>Vespoidea</taxon>
        <taxon>Vespidae</taxon>
        <taxon>Vespinae</taxon>
        <taxon>Vespa</taxon>
    </lineage>
</organism>
<proteinExistence type="evidence at protein level"/>
<comment type="function">
    <text evidence="1 2 3 4">Antimicrobial peptide against bacteria and fungi (By similarity). Mast cell degranulating peptide. Induces the chemotaxis of neutrophils (Ref.1). Its mast cell degranulation activity may be related to the activation of G-protein coupled receptors in mast cells as well as interaction with other proteins located in cell endosomal membranes in the mast cells (By similarity).</text>
</comment>
<comment type="subcellular location">
    <subcellularLocation>
        <location evidence="4">Secreted</location>
    </subcellularLocation>
</comment>
<comment type="tissue specificity">
    <text evidence="7">Expressed by the venom gland.</text>
</comment>
<comment type="miscellaneous">
    <text evidence="6">The primary structure of this peptide is identical to that of Vespid chemotactic peptide 5e from Vespa magnifica (AC P0C1M1).</text>
</comment>
<comment type="similarity">
    <text evidence="6">Belongs to the MCD family. Crabrolin subfamily.</text>
</comment>
<sequence>FLPIIAKLLGGLL</sequence>
<dbReference type="GO" id="GO:0005576">
    <property type="term" value="C:extracellular region"/>
    <property type="evidence" value="ECO:0007669"/>
    <property type="project" value="UniProtKB-SubCell"/>
</dbReference>
<dbReference type="GO" id="GO:0090729">
    <property type="term" value="F:toxin activity"/>
    <property type="evidence" value="ECO:0007669"/>
    <property type="project" value="UniProtKB-KW"/>
</dbReference>
<dbReference type="GO" id="GO:0006935">
    <property type="term" value="P:chemotaxis"/>
    <property type="evidence" value="ECO:0007669"/>
    <property type="project" value="UniProtKB-KW"/>
</dbReference>
<dbReference type="GO" id="GO:0042742">
    <property type="term" value="P:defense response to bacterium"/>
    <property type="evidence" value="ECO:0007669"/>
    <property type="project" value="UniProtKB-KW"/>
</dbReference>
<dbReference type="GO" id="GO:0050832">
    <property type="term" value="P:defense response to fungus"/>
    <property type="evidence" value="ECO:0007669"/>
    <property type="project" value="UniProtKB-KW"/>
</dbReference>
<dbReference type="GO" id="GO:0045087">
    <property type="term" value="P:innate immune response"/>
    <property type="evidence" value="ECO:0007669"/>
    <property type="project" value="UniProtKB-KW"/>
</dbReference>
<dbReference type="GO" id="GO:0031640">
    <property type="term" value="P:killing of cells of another organism"/>
    <property type="evidence" value="ECO:0007669"/>
    <property type="project" value="UniProtKB-KW"/>
</dbReference>
<feature type="peptide" id="PRO_0000044050" description="Vespid chemotactic peptide X" evidence="4">
    <location>
        <begin position="1"/>
        <end position="13"/>
    </location>
</feature>
<feature type="modified residue" description="Leucine amide" evidence="4">
    <location>
        <position position="13"/>
    </location>
</feature>
<keyword id="KW-0027">Amidation</keyword>
<keyword id="KW-0044">Antibiotic</keyword>
<keyword id="KW-0929">Antimicrobial</keyword>
<keyword id="KW-0145">Chemotaxis</keyword>
<keyword id="KW-0903">Direct protein sequencing</keyword>
<keyword id="KW-0295">Fungicide</keyword>
<keyword id="KW-1213">G-protein coupled receptor impairing toxin</keyword>
<keyword id="KW-0391">Immunity</keyword>
<keyword id="KW-0399">Innate immunity</keyword>
<keyword id="KW-0467">Mast cell degranulation</keyword>
<keyword id="KW-0677">Repeat</keyword>
<keyword id="KW-0964">Secreted</keyword>
<keyword id="KW-0800">Toxin</keyword>
<name>CRBL_VESXA</name>
<accession>P17234</accession>
<evidence type="ECO:0000250" key="1">
    <source>
        <dbReference type="UniProtKB" id="P01514"/>
    </source>
</evidence>
<evidence type="ECO:0000250" key="2">
    <source>
        <dbReference type="UniProtKB" id="P0C1M1"/>
    </source>
</evidence>
<evidence type="ECO:0000250" key="3">
    <source>
        <dbReference type="UniProtKB" id="P84914"/>
    </source>
</evidence>
<evidence type="ECO:0000269" key="4">
    <source ref="1"/>
</evidence>
<evidence type="ECO:0000303" key="5">
    <source ref="1"/>
</evidence>
<evidence type="ECO:0000305" key="6"/>
<evidence type="ECO:0000305" key="7">
    <source ref="1"/>
</evidence>
<protein>
    <recommendedName>
        <fullName evidence="5">Vespid chemotactic peptide X</fullName>
        <shortName evidence="5">VESCP-X</shortName>
        <shortName evidence="6">Ves-CP-X</shortName>
    </recommendedName>
</protein>